<proteinExistence type="inferred from homology"/>
<dbReference type="EC" id="4.1.1.37" evidence="1"/>
<dbReference type="EMBL" id="AM286415">
    <property type="protein sequence ID" value="CAL10429.1"/>
    <property type="molecule type" value="Genomic_DNA"/>
</dbReference>
<dbReference type="RefSeq" id="WP_005175675.1">
    <property type="nucleotide sequence ID" value="NC_008800.1"/>
</dbReference>
<dbReference type="RefSeq" id="YP_001004678.1">
    <property type="nucleotide sequence ID" value="NC_008800.1"/>
</dbReference>
<dbReference type="SMR" id="A1JIJ1"/>
<dbReference type="KEGG" id="yen:YE0297"/>
<dbReference type="PATRIC" id="fig|393305.7.peg.389"/>
<dbReference type="eggNOG" id="COG0407">
    <property type="taxonomic scope" value="Bacteria"/>
</dbReference>
<dbReference type="HOGENOM" id="CLU_040933_0_0_6"/>
<dbReference type="OrthoDB" id="9806656at2"/>
<dbReference type="UniPathway" id="UPA00251">
    <property type="reaction ID" value="UER00321"/>
</dbReference>
<dbReference type="Proteomes" id="UP000000642">
    <property type="component" value="Chromosome"/>
</dbReference>
<dbReference type="GO" id="GO:0005829">
    <property type="term" value="C:cytosol"/>
    <property type="evidence" value="ECO:0007669"/>
    <property type="project" value="TreeGrafter"/>
</dbReference>
<dbReference type="GO" id="GO:0004853">
    <property type="term" value="F:uroporphyrinogen decarboxylase activity"/>
    <property type="evidence" value="ECO:0007669"/>
    <property type="project" value="UniProtKB-UniRule"/>
</dbReference>
<dbReference type="GO" id="GO:0019353">
    <property type="term" value="P:protoporphyrinogen IX biosynthetic process from glutamate"/>
    <property type="evidence" value="ECO:0007669"/>
    <property type="project" value="TreeGrafter"/>
</dbReference>
<dbReference type="CDD" id="cd00717">
    <property type="entry name" value="URO-D"/>
    <property type="match status" value="1"/>
</dbReference>
<dbReference type="FunFam" id="3.20.20.210:FF:000001">
    <property type="entry name" value="Uroporphyrinogen decarboxylase"/>
    <property type="match status" value="1"/>
</dbReference>
<dbReference type="Gene3D" id="3.20.20.210">
    <property type="match status" value="1"/>
</dbReference>
<dbReference type="HAMAP" id="MF_00218">
    <property type="entry name" value="URO_D"/>
    <property type="match status" value="1"/>
</dbReference>
<dbReference type="InterPro" id="IPR038071">
    <property type="entry name" value="UROD/MetE-like_sf"/>
</dbReference>
<dbReference type="InterPro" id="IPR006361">
    <property type="entry name" value="Uroporphyrinogen_deCO2ase_HemE"/>
</dbReference>
<dbReference type="InterPro" id="IPR000257">
    <property type="entry name" value="Uroporphyrinogen_deCOase"/>
</dbReference>
<dbReference type="NCBIfam" id="TIGR01464">
    <property type="entry name" value="hemE"/>
    <property type="match status" value="1"/>
</dbReference>
<dbReference type="PANTHER" id="PTHR21091">
    <property type="entry name" value="METHYLTETRAHYDROFOLATE:HOMOCYSTEINE METHYLTRANSFERASE RELATED"/>
    <property type="match status" value="1"/>
</dbReference>
<dbReference type="PANTHER" id="PTHR21091:SF169">
    <property type="entry name" value="UROPORPHYRINOGEN DECARBOXYLASE"/>
    <property type="match status" value="1"/>
</dbReference>
<dbReference type="Pfam" id="PF01208">
    <property type="entry name" value="URO-D"/>
    <property type="match status" value="1"/>
</dbReference>
<dbReference type="SUPFAM" id="SSF51726">
    <property type="entry name" value="UROD/MetE-like"/>
    <property type="match status" value="1"/>
</dbReference>
<dbReference type="PROSITE" id="PS00906">
    <property type="entry name" value="UROD_1"/>
    <property type="match status" value="1"/>
</dbReference>
<dbReference type="PROSITE" id="PS00907">
    <property type="entry name" value="UROD_2"/>
    <property type="match status" value="1"/>
</dbReference>
<reference key="1">
    <citation type="journal article" date="2006" name="PLoS Genet.">
        <title>The complete genome sequence and comparative genome analysis of the high pathogenicity Yersinia enterocolitica strain 8081.</title>
        <authorList>
            <person name="Thomson N.R."/>
            <person name="Howard S."/>
            <person name="Wren B.W."/>
            <person name="Holden M.T.G."/>
            <person name="Crossman L."/>
            <person name="Challis G.L."/>
            <person name="Churcher C."/>
            <person name="Mungall K."/>
            <person name="Brooks K."/>
            <person name="Chillingworth T."/>
            <person name="Feltwell T."/>
            <person name="Abdellah Z."/>
            <person name="Hauser H."/>
            <person name="Jagels K."/>
            <person name="Maddison M."/>
            <person name="Moule S."/>
            <person name="Sanders M."/>
            <person name="Whitehead S."/>
            <person name="Quail M.A."/>
            <person name="Dougan G."/>
            <person name="Parkhill J."/>
            <person name="Prentice M.B."/>
        </authorList>
    </citation>
    <scope>NUCLEOTIDE SEQUENCE [LARGE SCALE GENOMIC DNA]</scope>
    <source>
        <strain>NCTC 13174 / 8081</strain>
    </source>
</reference>
<sequence>MNELKNDRYLRALLRQPVDVTPVWMMRQAGRYLPEYKATRAIAGDFMSLCKNAELACEVTMQPLRRYPLDAAILFSDILTIPDAMGLGLYFETGEGPRFQSPITCRADVEKLPIPDPEQELGYVMNAVRTIRRELAGAVPLIGFSGSPWTLATYMVEGGSSKAFTKLKKMMYAEPQTLHLLLDKLADSVILYLNAQIKAGAQSVMVFDTWGGVLTGRDYAEFSLNYMHKIVDGLIRENDGRRVPVTLFTKGGGQWLEAMAATGCDALGLDWTTDIADARRRVGDKVALQGNMDPSILYAPAARIEEEVSTILAGFGQGEGHVFNLGHGIHQDVPPEHAGAFVKAVHALSKPYHQK</sequence>
<feature type="chain" id="PRO_1000024002" description="Uroporphyrinogen decarboxylase">
    <location>
        <begin position="1"/>
        <end position="355"/>
    </location>
</feature>
<feature type="binding site" evidence="1">
    <location>
        <begin position="27"/>
        <end position="31"/>
    </location>
    <ligand>
        <name>substrate</name>
    </ligand>
</feature>
<feature type="binding site" evidence="1">
    <location>
        <position position="77"/>
    </location>
    <ligand>
        <name>substrate</name>
    </ligand>
</feature>
<feature type="binding site" evidence="1">
    <location>
        <position position="154"/>
    </location>
    <ligand>
        <name>substrate</name>
    </ligand>
</feature>
<feature type="binding site" evidence="1">
    <location>
        <position position="209"/>
    </location>
    <ligand>
        <name>substrate</name>
    </ligand>
</feature>
<feature type="binding site" evidence="1">
    <location>
        <position position="327"/>
    </location>
    <ligand>
        <name>substrate</name>
    </ligand>
</feature>
<feature type="site" description="Transition state stabilizer" evidence="1">
    <location>
        <position position="77"/>
    </location>
</feature>
<keyword id="KW-0963">Cytoplasm</keyword>
<keyword id="KW-0210">Decarboxylase</keyword>
<keyword id="KW-0456">Lyase</keyword>
<keyword id="KW-0627">Porphyrin biosynthesis</keyword>
<protein>
    <recommendedName>
        <fullName evidence="1">Uroporphyrinogen decarboxylase</fullName>
        <shortName evidence="1">UPD</shortName>
        <shortName evidence="1">URO-D</shortName>
        <ecNumber evidence="1">4.1.1.37</ecNumber>
    </recommendedName>
</protein>
<name>DCUP_YERE8</name>
<evidence type="ECO:0000255" key="1">
    <source>
        <dbReference type="HAMAP-Rule" id="MF_00218"/>
    </source>
</evidence>
<gene>
    <name evidence="1" type="primary">hemE</name>
    <name type="ordered locus">YE0297</name>
</gene>
<comment type="function">
    <text evidence="1">Catalyzes the decarboxylation of four acetate groups of uroporphyrinogen-III to yield coproporphyrinogen-III.</text>
</comment>
<comment type="catalytic activity">
    <reaction evidence="1">
        <text>uroporphyrinogen III + 4 H(+) = coproporphyrinogen III + 4 CO2</text>
        <dbReference type="Rhea" id="RHEA:19865"/>
        <dbReference type="ChEBI" id="CHEBI:15378"/>
        <dbReference type="ChEBI" id="CHEBI:16526"/>
        <dbReference type="ChEBI" id="CHEBI:57308"/>
        <dbReference type="ChEBI" id="CHEBI:57309"/>
        <dbReference type="EC" id="4.1.1.37"/>
    </reaction>
</comment>
<comment type="pathway">
    <text evidence="1">Porphyrin-containing compound metabolism; protoporphyrin-IX biosynthesis; coproporphyrinogen-III from 5-aminolevulinate: step 4/4.</text>
</comment>
<comment type="subunit">
    <text evidence="1">Homodimer.</text>
</comment>
<comment type="subcellular location">
    <subcellularLocation>
        <location evidence="1">Cytoplasm</location>
    </subcellularLocation>
</comment>
<comment type="similarity">
    <text evidence="1">Belongs to the uroporphyrinogen decarboxylase family.</text>
</comment>
<accession>A1JIJ1</accession>
<organism>
    <name type="scientific">Yersinia enterocolitica serotype O:8 / biotype 1B (strain NCTC 13174 / 8081)</name>
    <dbReference type="NCBI Taxonomy" id="393305"/>
    <lineage>
        <taxon>Bacteria</taxon>
        <taxon>Pseudomonadati</taxon>
        <taxon>Pseudomonadota</taxon>
        <taxon>Gammaproteobacteria</taxon>
        <taxon>Enterobacterales</taxon>
        <taxon>Yersiniaceae</taxon>
        <taxon>Yersinia</taxon>
    </lineage>
</organism>